<keyword id="KW-0997">Cell inner membrane</keyword>
<keyword id="KW-1003">Cell membrane</keyword>
<keyword id="KW-0418">Kinase</keyword>
<keyword id="KW-0472">Membrane</keyword>
<keyword id="KW-0597">Phosphoprotein</keyword>
<keyword id="KW-0598">Phosphotransferase system</keyword>
<keyword id="KW-1185">Reference proteome</keyword>
<keyword id="KW-0762">Sugar transport</keyword>
<keyword id="KW-0808">Transferase</keyword>
<keyword id="KW-0812">Transmembrane</keyword>
<keyword id="KW-1133">Transmembrane helix</keyword>
<keyword id="KW-0813">Transport</keyword>
<protein>
    <recommendedName>
        <fullName evidence="6">PTS system glucose-specific EIICB component</fullName>
    </recommendedName>
    <alternativeName>
        <fullName evidence="6">EIICB-Glc</fullName>
        <shortName evidence="6">EII-Glc</shortName>
    </alternativeName>
    <domain>
        <recommendedName>
            <fullName evidence="6">Glucose permease IIC component</fullName>
        </recommendedName>
        <alternativeName>
            <fullName evidence="6">PTS system glucose-specific EIIC component</fullName>
        </alternativeName>
    </domain>
    <domain>
        <recommendedName>
            <fullName evidence="6">Glucose-specific phosphotransferase enzyme IIB component</fullName>
            <ecNumber evidence="5">2.7.1.199</ecNumber>
        </recommendedName>
        <alternativeName>
            <fullName evidence="6">PTS system glucose-specific EIIB component</fullName>
        </alternativeName>
    </domain>
</protein>
<feature type="chain" id="PRO_0000186531" description="PTS system glucose-specific EIICB component">
    <location>
        <begin position="1"/>
        <end position="477"/>
    </location>
</feature>
<feature type="topological domain" description="Cytoplasmic" evidence="2">
    <location>
        <begin position="1"/>
        <end position="14"/>
    </location>
</feature>
<feature type="transmembrane region" description="Helical" evidence="4">
    <location>
        <begin position="15"/>
        <end position="35"/>
    </location>
</feature>
<feature type="topological domain" description="Periplasmic" evidence="2">
    <location>
        <begin position="36"/>
        <end position="50"/>
    </location>
</feature>
<feature type="transmembrane region" description="Helical" evidence="4">
    <location>
        <begin position="51"/>
        <end position="71"/>
    </location>
</feature>
<feature type="topological domain" description="Cytoplasmic" evidence="2">
    <location>
        <begin position="72"/>
        <end position="79"/>
    </location>
</feature>
<feature type="transmembrane region" description="Helical" evidence="4">
    <location>
        <begin position="80"/>
        <end position="100"/>
    </location>
</feature>
<feature type="topological domain" description="Periplasmic" evidence="2">
    <location>
        <begin position="101"/>
        <end position="111"/>
    </location>
</feature>
<feature type="transmembrane region" description="Helical" evidence="4">
    <location>
        <begin position="112"/>
        <end position="132"/>
    </location>
</feature>
<feature type="topological domain" description="Cytoplasmic" evidence="2">
    <location>
        <begin position="133"/>
        <end position="151"/>
    </location>
</feature>
<feature type="transmembrane region" description="Helical" evidence="4">
    <location>
        <begin position="152"/>
        <end position="172"/>
    </location>
</feature>
<feature type="topological domain" description="Periplasmic" evidence="2">
    <location>
        <begin position="173"/>
        <end position="190"/>
    </location>
</feature>
<feature type="transmembrane region" description="Helical" evidence="4">
    <location>
        <begin position="191"/>
        <end position="211"/>
    </location>
</feature>
<feature type="topological domain" description="Cytoplasmic" evidence="2">
    <location>
        <begin position="212"/>
        <end position="248"/>
    </location>
</feature>
<feature type="transmembrane region" description="Helical" evidence="4">
    <location>
        <begin position="249"/>
        <end position="269"/>
    </location>
</feature>
<feature type="topological domain" description="Periplasmic" evidence="2">
    <location>
        <begin position="270"/>
        <end position="279"/>
    </location>
</feature>
<feature type="transmembrane region" description="Helical" evidence="4">
    <location>
        <begin position="280"/>
        <end position="300"/>
    </location>
</feature>
<feature type="topological domain" description="Cytoplasmic" evidence="2">
    <location>
        <begin position="301"/>
        <end position="309"/>
    </location>
</feature>
<feature type="transmembrane region" description="Helical" evidence="4">
    <location>
        <begin position="310"/>
        <end position="330"/>
    </location>
</feature>
<feature type="topological domain" description="Periplasmic" evidence="2">
    <location>
        <begin position="331"/>
        <end position="355"/>
    </location>
</feature>
<feature type="transmembrane region" description="Helical" evidence="4">
    <location>
        <begin position="356"/>
        <end position="376"/>
    </location>
</feature>
<feature type="topological domain" description="Cytoplasmic" evidence="2">
    <location>
        <begin position="377"/>
        <end position="477"/>
    </location>
</feature>
<feature type="domain" description="PTS EIIC type-1" evidence="4">
    <location>
        <begin position="1"/>
        <end position="388"/>
    </location>
</feature>
<feature type="domain" description="PTS EIIB type-1" evidence="3">
    <location>
        <begin position="399"/>
        <end position="477"/>
    </location>
</feature>
<feature type="active site" description="Phosphocysteine intermediate; for EIIB activity" evidence="1 3">
    <location>
        <position position="421"/>
    </location>
</feature>
<feature type="modified residue" description="Phosphocysteine" evidence="1">
    <location>
        <position position="421"/>
    </location>
</feature>
<feature type="sequence conflict" description="In Ref. 1; CAA52702." evidence="7" ref="1">
    <original>F</original>
    <variation>S</variation>
    <location>
        <position position="218"/>
    </location>
</feature>
<feature type="sequence conflict" description="In Ref. 1; CAA52702." evidence="7" ref="1">
    <original>L</original>
    <variation>F</variation>
    <location>
        <position position="379"/>
    </location>
</feature>
<feature type="sequence conflict" description="In Ref. 1; CAA52702." evidence="7" ref="1">
    <original>S</original>
    <variation>H</variation>
    <location>
        <position position="477"/>
    </location>
</feature>
<gene>
    <name type="primary">ptsG</name>
    <name type="ordered locus">STM1203</name>
</gene>
<organism>
    <name type="scientific">Salmonella typhimurium (strain LT2 / SGSC1412 / ATCC 700720)</name>
    <dbReference type="NCBI Taxonomy" id="99287"/>
    <lineage>
        <taxon>Bacteria</taxon>
        <taxon>Pseudomonadati</taxon>
        <taxon>Pseudomonadota</taxon>
        <taxon>Gammaproteobacteria</taxon>
        <taxon>Enterobacterales</taxon>
        <taxon>Enterobacteriaceae</taxon>
        <taxon>Salmonella</taxon>
    </lineage>
</organism>
<comment type="function">
    <text evidence="5">The phosphoenolpyruvate-dependent sugar phosphotransferase system (sugar PTS), a major carbohydrate active transport system, catalyzes the phosphorylation of incoming sugar substrates concomitantly with their translocation across the cell membrane. The enzyme II complex composed of PtsG and Crr is involved in glucose transport. Also functions as a chemoreceptor monitoring the environment for changes in sugar concentration. It can also phosphorylate mannose, methyl alpha-glucoside and 2-deoxy-glucose.</text>
</comment>
<comment type="catalytic activity">
    <reaction evidence="5">
        <text>N(pros)-phospho-L-histidyl-[protein] + D-glucose(out) = D-glucose 6-phosphate(in) + L-histidyl-[protein]</text>
        <dbReference type="Rhea" id="RHEA:33367"/>
        <dbReference type="Rhea" id="RHEA-COMP:9745"/>
        <dbReference type="Rhea" id="RHEA-COMP:9746"/>
        <dbReference type="ChEBI" id="CHEBI:4167"/>
        <dbReference type="ChEBI" id="CHEBI:29979"/>
        <dbReference type="ChEBI" id="CHEBI:61548"/>
        <dbReference type="ChEBI" id="CHEBI:64837"/>
        <dbReference type="EC" id="2.7.1.199"/>
    </reaction>
</comment>
<comment type="biophysicochemical properties">
    <kinetics>
        <KM evidence="5">6 uM for methyl alpha-glucoside</KM>
        <KM evidence="5">10 uM for glucose</KM>
        <KM evidence="5">40 uM for mannose</KM>
        <KM evidence="5">200 uM for 2-deoxy-glucose</KM>
        <Vmax evidence="5">126.0 umol/min/mg enzyme with methyl alpha-glucoside as substrate</Vmax>
        <Vmax evidence="5">126.0 umol/min/mg enzyme with glucose as substrate</Vmax>
        <Vmax evidence="5">10.0 umol/min/mg enzyme with mannose as substrate</Vmax>
        <Vmax evidence="5">10.0 umol/min/mg enzyme with 2-deoxy-glucose as substrate</Vmax>
    </kinetics>
</comment>
<comment type="subcellular location">
    <subcellularLocation>
        <location evidence="4">Cell inner membrane</location>
        <topology evidence="4">Multi-pass membrane protein</topology>
    </subcellularLocation>
</comment>
<comment type="domain">
    <text evidence="3">The EIIB domain is phosphorylated by phospho-EIIA on a cysteinyl or histidyl residue, depending on the transported sugar. Then, it transfers the phosphoryl group to the sugar substrate concomitantly with the sugar uptake processed by the EIIC domain.</text>
</comment>
<comment type="domain">
    <text evidence="4">The EIIC domain forms the PTS system translocation channel and contains the specific substrate-binding site.</text>
</comment>
<accession>P37439</accession>
<sequence length="477" mass="50497">MFKNAFANLQKVGKSLMLPVSVLPIAGILLGVGSANFSWLPAVVSHVMAEAGGSVFANMPLIFAIGVALGFTNNDGVSALAAVVAYGIMVKTMAVVAPLVLHLPAEEIAAKHLADTGVLGGIISGAIAAYMFNRFYRIKLPEYLGFFAGKRFVPIISGLAAIFTGVVLSFVWPPIGTAIQAFSQWAAYQNPVVAFGIYGFIERCLVPFGLHHIWNVPFQMQIGEYTNAAGQVFHGDIPRYMAGDPTAGMLSGGFLFKMYGLPAAAIAIWHSAKPENRAKVGGIMISAALTSFLTGITEPIEFSFMFVAPILYIIHAILAGLAFPICILLGMRDGTSFSHGLIDFIVLSGNSSKLWLFPIVGAGYAIVYYTVFRVLIKALDLKTPGREDTTDDAKAGATSEMAPALVAAFGGKENITNLDACITRLRVSVADVAKVDQAGLKKLGAAGVVVAGSGVQAIFGTKSDNLKTEMDEYIRNS</sequence>
<proteinExistence type="evidence at protein level"/>
<evidence type="ECO:0000250" key="1">
    <source>
        <dbReference type="UniProtKB" id="P69786"/>
    </source>
</evidence>
<evidence type="ECO:0000255" key="2"/>
<evidence type="ECO:0000255" key="3">
    <source>
        <dbReference type="PROSITE-ProRule" id="PRU00421"/>
    </source>
</evidence>
<evidence type="ECO:0000255" key="4">
    <source>
        <dbReference type="PROSITE-ProRule" id="PRU00426"/>
    </source>
</evidence>
<evidence type="ECO:0000269" key="5">
    <source>
    </source>
</evidence>
<evidence type="ECO:0000303" key="6">
    <source>
    </source>
</evidence>
<evidence type="ECO:0000305" key="7"/>
<reference key="1">
    <citation type="submission" date="1993-08" db="EMBL/GenBank/DDBJ databases">
        <authorList>
            <person name="Stolz B."/>
            <person name="Wehrli C."/>
            <person name="Erni B."/>
        </authorList>
    </citation>
    <scope>NUCLEOTIDE SEQUENCE [GENOMIC DNA]</scope>
    <source>
        <strain>SB3507</strain>
    </source>
</reference>
<reference key="2">
    <citation type="journal article" date="2001" name="Nature">
        <title>Complete genome sequence of Salmonella enterica serovar Typhimurium LT2.</title>
        <authorList>
            <person name="McClelland M."/>
            <person name="Sanderson K.E."/>
            <person name="Spieth J."/>
            <person name="Clifton S.W."/>
            <person name="Latreille P."/>
            <person name="Courtney L."/>
            <person name="Porwollik S."/>
            <person name="Ali J."/>
            <person name="Dante M."/>
            <person name="Du F."/>
            <person name="Hou S."/>
            <person name="Layman D."/>
            <person name="Leonard S."/>
            <person name="Nguyen C."/>
            <person name="Scott K."/>
            <person name="Holmes A."/>
            <person name="Grewal N."/>
            <person name="Mulvaney E."/>
            <person name="Ryan E."/>
            <person name="Sun H."/>
            <person name="Florea L."/>
            <person name="Miller W."/>
            <person name="Stoneking T."/>
            <person name="Nhan M."/>
            <person name="Waterston R."/>
            <person name="Wilson R.K."/>
        </authorList>
    </citation>
    <scope>NUCLEOTIDE SEQUENCE [LARGE SCALE GENOMIC DNA]</scope>
    <source>
        <strain>LT2 / SGSC1412 / ATCC 700720</strain>
    </source>
</reference>
<reference key="3">
    <citation type="journal article" date="1982" name="J. Biol. Chem.">
        <title>Sugar transport by the bacterial phosphotransferase system. The glucose receptors of the Salmonella typhimurium phosphotransferase system.</title>
        <authorList>
            <person name="Stock J.B."/>
            <person name="Waygood E.B."/>
            <person name="Meadow N.D."/>
            <person name="Postma P.W."/>
            <person name="Roseman S."/>
        </authorList>
    </citation>
    <scope>FUNCTION</scope>
    <scope>CATALYTIC ACTIVITY</scope>
    <scope>BIOPHYSICOCHEMICAL PROPERTIES</scope>
    <scope>SUBSTRATE SPECIFICITY</scope>
</reference>
<dbReference type="EC" id="2.7.1.199" evidence="5"/>
<dbReference type="EMBL" id="X74629">
    <property type="protein sequence ID" value="CAA52702.1"/>
    <property type="molecule type" value="Genomic_DNA"/>
</dbReference>
<dbReference type="EMBL" id="AE006468">
    <property type="protein sequence ID" value="AAL20132.1"/>
    <property type="molecule type" value="Genomic_DNA"/>
</dbReference>
<dbReference type="PIR" id="S36620">
    <property type="entry name" value="S36620"/>
</dbReference>
<dbReference type="RefSeq" id="NP_460173.1">
    <property type="nucleotide sequence ID" value="NC_003197.2"/>
</dbReference>
<dbReference type="RefSeq" id="WP_000475705.1">
    <property type="nucleotide sequence ID" value="NC_003197.2"/>
</dbReference>
<dbReference type="SMR" id="P37439"/>
<dbReference type="STRING" id="99287.STM1203"/>
<dbReference type="PaxDb" id="99287-STM1203"/>
<dbReference type="GeneID" id="1252721"/>
<dbReference type="GeneID" id="66755606"/>
<dbReference type="KEGG" id="stm:STM1203"/>
<dbReference type="PATRIC" id="fig|99287.12.peg.1272"/>
<dbReference type="HOGENOM" id="CLU_012312_1_0_6"/>
<dbReference type="OMA" id="AWAFNRF"/>
<dbReference type="PhylomeDB" id="P37439"/>
<dbReference type="BioCyc" id="SENT99287:STM1203-MONOMER"/>
<dbReference type="Proteomes" id="UP000001014">
    <property type="component" value="Chromosome"/>
</dbReference>
<dbReference type="GO" id="GO:0005886">
    <property type="term" value="C:plasma membrane"/>
    <property type="evidence" value="ECO:0000318"/>
    <property type="project" value="GO_Central"/>
</dbReference>
<dbReference type="GO" id="GO:0055056">
    <property type="term" value="F:D-glucose transmembrane transporter activity"/>
    <property type="evidence" value="ECO:0007669"/>
    <property type="project" value="InterPro"/>
</dbReference>
<dbReference type="GO" id="GO:0016301">
    <property type="term" value="F:kinase activity"/>
    <property type="evidence" value="ECO:0007669"/>
    <property type="project" value="UniProtKB-KW"/>
</dbReference>
<dbReference type="GO" id="GO:0008982">
    <property type="term" value="F:protein-N(PI)-phosphohistidine-sugar phosphotransferase activity"/>
    <property type="evidence" value="ECO:0007669"/>
    <property type="project" value="InterPro"/>
</dbReference>
<dbReference type="GO" id="GO:0090564">
    <property type="term" value="F:protein-phosphocysteine-glucose phosphotransferase system transporter activity"/>
    <property type="evidence" value="ECO:0000318"/>
    <property type="project" value="GO_Central"/>
</dbReference>
<dbReference type="GO" id="GO:1904659">
    <property type="term" value="P:D-glucose transmembrane transport"/>
    <property type="evidence" value="ECO:0000318"/>
    <property type="project" value="GO_Central"/>
</dbReference>
<dbReference type="GO" id="GO:0009401">
    <property type="term" value="P:phosphoenolpyruvate-dependent sugar phosphotransferase system"/>
    <property type="evidence" value="ECO:0000318"/>
    <property type="project" value="GO_Central"/>
</dbReference>
<dbReference type="CDD" id="cd00212">
    <property type="entry name" value="PTS_IIB_glc"/>
    <property type="match status" value="1"/>
</dbReference>
<dbReference type="FunFam" id="3.30.1360.60:FF:000001">
    <property type="entry name" value="PTS system glucose-specific IIBC component PtsG"/>
    <property type="match status" value="1"/>
</dbReference>
<dbReference type="Gene3D" id="3.30.1360.60">
    <property type="entry name" value="Glucose permease domain IIB"/>
    <property type="match status" value="1"/>
</dbReference>
<dbReference type="InterPro" id="IPR036878">
    <property type="entry name" value="Glu_permease_IIB"/>
</dbReference>
<dbReference type="InterPro" id="IPR018113">
    <property type="entry name" value="PTrfase_EIIB_Cys"/>
</dbReference>
<dbReference type="InterPro" id="IPR003352">
    <property type="entry name" value="PTS_EIIC"/>
</dbReference>
<dbReference type="InterPro" id="IPR013013">
    <property type="entry name" value="PTS_EIIC_1"/>
</dbReference>
<dbReference type="InterPro" id="IPR050429">
    <property type="entry name" value="PTS_Glucose_EIICBA"/>
</dbReference>
<dbReference type="InterPro" id="IPR001996">
    <property type="entry name" value="PTS_IIB_1"/>
</dbReference>
<dbReference type="InterPro" id="IPR011299">
    <property type="entry name" value="PTS_IIBC_glc"/>
</dbReference>
<dbReference type="InterPro" id="IPR004719">
    <property type="entry name" value="PTS_maltose/Glc_sub_IIC"/>
</dbReference>
<dbReference type="NCBIfam" id="TIGR00826">
    <property type="entry name" value="EIIB_glc"/>
    <property type="match status" value="1"/>
</dbReference>
<dbReference type="NCBIfam" id="NF008301">
    <property type="entry name" value="PRK11089.1"/>
    <property type="match status" value="1"/>
</dbReference>
<dbReference type="NCBIfam" id="TIGR00852">
    <property type="entry name" value="pts-Glc"/>
    <property type="match status" value="1"/>
</dbReference>
<dbReference type="NCBIfam" id="TIGR02002">
    <property type="entry name" value="PTS-II-BC-glcB"/>
    <property type="match status" value="1"/>
</dbReference>
<dbReference type="PANTHER" id="PTHR30009">
    <property type="entry name" value="CYTOCHROME C-TYPE SYNTHESIS PROTEIN AND PTS TRANSMEMBRANE COMPONENT"/>
    <property type="match status" value="1"/>
</dbReference>
<dbReference type="PANTHER" id="PTHR30009:SF20">
    <property type="entry name" value="PTS SYSTEM GLUCOSE-SPECIFIC EIICB COMPONENT-RELATED"/>
    <property type="match status" value="1"/>
</dbReference>
<dbReference type="Pfam" id="PF00367">
    <property type="entry name" value="PTS_EIIB"/>
    <property type="match status" value="1"/>
</dbReference>
<dbReference type="Pfam" id="PF02378">
    <property type="entry name" value="PTS_EIIC"/>
    <property type="match status" value="1"/>
</dbReference>
<dbReference type="SUPFAM" id="SSF55604">
    <property type="entry name" value="Glucose permease domain IIB"/>
    <property type="match status" value="1"/>
</dbReference>
<dbReference type="PROSITE" id="PS51098">
    <property type="entry name" value="PTS_EIIB_TYPE_1"/>
    <property type="match status" value="1"/>
</dbReference>
<dbReference type="PROSITE" id="PS01035">
    <property type="entry name" value="PTS_EIIB_TYPE_1_CYS"/>
    <property type="match status" value="1"/>
</dbReference>
<dbReference type="PROSITE" id="PS51103">
    <property type="entry name" value="PTS_EIIC_TYPE_1"/>
    <property type="match status" value="1"/>
</dbReference>
<name>PTGCB_SALTY</name>